<name>CU10_LIMPO</name>
<protein>
    <recommendedName>
        <fullName>Cuticle protein 10</fullName>
    </recommendedName>
    <alternativeName>
        <fullName>LpCP10</fullName>
    </alternativeName>
</protein>
<sequence>LGEKGYSYSTGDSSVTVQHDTLPYSRYQGLYNYAHPGYNTYPYNQYQG</sequence>
<accession>P83357</accession>
<evidence type="ECO:0000269" key="1">
    <source>
    </source>
</evidence>
<evidence type="ECO:0000305" key="2"/>
<proteinExistence type="evidence at protein level"/>
<keyword id="KW-0193">Cuticle</keyword>
<keyword id="KW-0903">Direct protein sequencing</keyword>
<comment type="mass spectrometry"/>
<dbReference type="Proteomes" id="UP000694941">
    <property type="component" value="Unplaced"/>
</dbReference>
<dbReference type="GO" id="GO:0042302">
    <property type="term" value="F:structural constituent of cuticle"/>
    <property type="evidence" value="ECO:0007669"/>
    <property type="project" value="UniProtKB-KW"/>
</dbReference>
<reference key="1">
    <citation type="journal article" date="2003" name="Comp. Biochem. Physiol.">
        <title>Cuticular proteins from the horseshoe crab, Limulus polyphemus.</title>
        <authorList>
            <person name="Ditzel N."/>
            <person name="Andersen S.O."/>
            <person name="Hoejrup P."/>
        </authorList>
    </citation>
    <scope>PROTEIN SEQUENCE</scope>
    <scope>MASS SPECTROMETRY</scope>
    <source>
        <tissue>Carapace cuticle</tissue>
    </source>
</reference>
<organism evidence="2">
    <name type="scientific">Limulus polyphemus</name>
    <name type="common">Atlantic horseshoe crab</name>
    <dbReference type="NCBI Taxonomy" id="6850"/>
    <lineage>
        <taxon>Eukaryota</taxon>
        <taxon>Metazoa</taxon>
        <taxon>Ecdysozoa</taxon>
        <taxon>Arthropoda</taxon>
        <taxon>Chelicerata</taxon>
        <taxon>Merostomata</taxon>
        <taxon>Xiphosura</taxon>
        <taxon>Limulidae</taxon>
        <taxon>Limulus</taxon>
    </lineage>
</organism>
<feature type="chain" id="PRO_0000196176" description="Cuticle protein 10">
    <location>
        <begin position="1"/>
        <end position="48" status="greater than"/>
    </location>
</feature>
<feature type="non-terminal residue">
    <location>
        <position position="48"/>
    </location>
</feature>